<evidence type="ECO:0000255" key="1">
    <source>
        <dbReference type="HAMAP-Rule" id="MF_00372"/>
    </source>
</evidence>
<evidence type="ECO:0000305" key="2"/>
<reference key="1">
    <citation type="journal article" date="2001" name="Proc. Natl. Acad. Sci. U.S.A.">
        <title>The complete sequence of the 1,683-kb pSymB megaplasmid from the N2-fixing endosymbiont Sinorhizobium meliloti.</title>
        <authorList>
            <person name="Finan T.M."/>
            <person name="Weidner S."/>
            <person name="Wong K."/>
            <person name="Buhrmester J."/>
            <person name="Chain P."/>
            <person name="Vorhoelter F.J."/>
            <person name="Hernandez-Lucas I."/>
            <person name="Becker A."/>
            <person name="Cowie A."/>
            <person name="Gouzy J."/>
            <person name="Golding B."/>
            <person name="Puehler A."/>
        </authorList>
    </citation>
    <scope>NUCLEOTIDE SEQUENCE [LARGE SCALE GENOMIC DNA]</scope>
    <source>
        <strain>1021</strain>
    </source>
</reference>
<reference key="2">
    <citation type="journal article" date="2001" name="Science">
        <title>The composite genome of the legume symbiont Sinorhizobium meliloti.</title>
        <authorList>
            <person name="Galibert F."/>
            <person name="Finan T.M."/>
            <person name="Long S.R."/>
            <person name="Puehler A."/>
            <person name="Abola P."/>
            <person name="Ampe F."/>
            <person name="Barloy-Hubler F."/>
            <person name="Barnett M.J."/>
            <person name="Becker A."/>
            <person name="Boistard P."/>
            <person name="Bothe G."/>
            <person name="Boutry M."/>
            <person name="Bowser L."/>
            <person name="Buhrmester J."/>
            <person name="Cadieu E."/>
            <person name="Capela D."/>
            <person name="Chain P."/>
            <person name="Cowie A."/>
            <person name="Davis R.W."/>
            <person name="Dreano S."/>
            <person name="Federspiel N.A."/>
            <person name="Fisher R.F."/>
            <person name="Gloux S."/>
            <person name="Godrie T."/>
            <person name="Goffeau A."/>
            <person name="Golding B."/>
            <person name="Gouzy J."/>
            <person name="Gurjal M."/>
            <person name="Hernandez-Lucas I."/>
            <person name="Hong A."/>
            <person name="Huizar L."/>
            <person name="Hyman R.W."/>
            <person name="Jones T."/>
            <person name="Kahn D."/>
            <person name="Kahn M.L."/>
            <person name="Kalman S."/>
            <person name="Keating D.H."/>
            <person name="Kiss E."/>
            <person name="Komp C."/>
            <person name="Lelaure V."/>
            <person name="Masuy D."/>
            <person name="Palm C."/>
            <person name="Peck M.C."/>
            <person name="Pohl T.M."/>
            <person name="Portetelle D."/>
            <person name="Purnelle B."/>
            <person name="Ramsperger U."/>
            <person name="Surzycki R."/>
            <person name="Thebault P."/>
            <person name="Vandenbol M."/>
            <person name="Vorhoelter F.J."/>
            <person name="Weidner S."/>
            <person name="Wells D.H."/>
            <person name="Wong K."/>
            <person name="Yeh K.-C."/>
            <person name="Batut J."/>
        </authorList>
    </citation>
    <scope>NUCLEOTIDE SEQUENCE [LARGE SCALE GENOMIC DNA]</scope>
    <source>
        <strain>1021</strain>
    </source>
</reference>
<reference key="3">
    <citation type="submission" date="1997-11" db="EMBL/GenBank/DDBJ databases">
        <title>A Sinorhizobium meliloti hutH-mutant, defective in the histidine degrading enzyme histidase, is impaired in stationary phase survival.</title>
        <authorList>
            <person name="Uhde C."/>
            <person name="Schmidt R."/>
            <person name="Droege M."/>
            <person name="Jording D."/>
            <person name="Puehler A."/>
            <person name="Selbitschka W."/>
        </authorList>
    </citation>
    <scope>NUCLEOTIDE SEQUENCE [GENOMIC DNA] OF 11-415</scope>
    <source>
        <strain>RCR2011 / SU47</strain>
    </source>
</reference>
<name>HUTI_RHIME</name>
<accession>O31196</accession>
<protein>
    <recommendedName>
        <fullName evidence="1">Imidazolonepropionase</fullName>
        <ecNumber evidence="1">3.5.2.7</ecNumber>
    </recommendedName>
    <alternativeName>
        <fullName evidence="1">Imidazolone-5-propionate hydrolase</fullName>
    </alternativeName>
</protein>
<gene>
    <name evidence="1" type="primary">hutI</name>
    <name type="ordered locus">RB0832</name>
    <name type="ORF">SMb21166</name>
</gene>
<sequence length="415" mass="44058">MDGNENPNPARTSLWRNARLATLREELGPLGIIEDGVIAVRGERIVYAGPEAGLPSELARADQVFDCEGRWVTPALIDCHTHIVHGGNRAREFQLRLEGATYEEIARAGGGIASTVEATNALSVEALVEAALPRLDTLLAEGVSTVEVKSGYGLNVEAELKMLRAARRLESLRPVRIVTSYLAAHATPPEFRGRNGDYIAEVVLPGLTAAHAEGLADAVDGFCEGIAFSPAEIASVFGRAKSLGLPVKLHAEQLSDLGGAKLAASYGALSADHLEYLDAAGAAAMAKAGTVAVLLPGAFYTLREKQLPPVEALREAGTRIAIATDCNPGTSPLTSLLLTLNMSATLFRLTLEECLAGVTREAARALGILGETGTIEAGKSADLAIWNIDQPAELIYRIGFNPLRERIFKGERILR</sequence>
<feature type="chain" id="PRO_0000160955" description="Imidazolonepropionase">
    <location>
        <begin position="1"/>
        <end position="415"/>
    </location>
</feature>
<feature type="binding site" evidence="1">
    <location>
        <position position="80"/>
    </location>
    <ligand>
        <name>Fe(3+)</name>
        <dbReference type="ChEBI" id="CHEBI:29034"/>
    </ligand>
</feature>
<feature type="binding site" evidence="1">
    <location>
        <position position="80"/>
    </location>
    <ligand>
        <name>Zn(2+)</name>
        <dbReference type="ChEBI" id="CHEBI:29105"/>
    </ligand>
</feature>
<feature type="binding site" evidence="1">
    <location>
        <position position="82"/>
    </location>
    <ligand>
        <name>Fe(3+)</name>
        <dbReference type="ChEBI" id="CHEBI:29034"/>
    </ligand>
</feature>
<feature type="binding site" evidence="1">
    <location>
        <position position="82"/>
    </location>
    <ligand>
        <name>Zn(2+)</name>
        <dbReference type="ChEBI" id="CHEBI:29105"/>
    </ligand>
</feature>
<feature type="binding site" evidence="1">
    <location>
        <position position="89"/>
    </location>
    <ligand>
        <name>4-imidazolone-5-propanoate</name>
        <dbReference type="ChEBI" id="CHEBI:77893"/>
    </ligand>
</feature>
<feature type="binding site" evidence="1">
    <location>
        <position position="152"/>
    </location>
    <ligand>
        <name>4-imidazolone-5-propanoate</name>
        <dbReference type="ChEBI" id="CHEBI:77893"/>
    </ligand>
</feature>
<feature type="binding site" evidence="1">
    <location>
        <position position="152"/>
    </location>
    <ligand>
        <name>N-formimidoyl-L-glutamate</name>
        <dbReference type="ChEBI" id="CHEBI:58928"/>
    </ligand>
</feature>
<feature type="binding site" evidence="1">
    <location>
        <position position="185"/>
    </location>
    <ligand>
        <name>4-imidazolone-5-propanoate</name>
        <dbReference type="ChEBI" id="CHEBI:77893"/>
    </ligand>
</feature>
<feature type="binding site" evidence="1">
    <location>
        <position position="250"/>
    </location>
    <ligand>
        <name>Fe(3+)</name>
        <dbReference type="ChEBI" id="CHEBI:29034"/>
    </ligand>
</feature>
<feature type="binding site" evidence="1">
    <location>
        <position position="250"/>
    </location>
    <ligand>
        <name>Zn(2+)</name>
        <dbReference type="ChEBI" id="CHEBI:29105"/>
    </ligand>
</feature>
<feature type="binding site" evidence="1">
    <location>
        <position position="253"/>
    </location>
    <ligand>
        <name>4-imidazolone-5-propanoate</name>
        <dbReference type="ChEBI" id="CHEBI:77893"/>
    </ligand>
</feature>
<feature type="binding site" evidence="1">
    <location>
        <position position="325"/>
    </location>
    <ligand>
        <name>Fe(3+)</name>
        <dbReference type="ChEBI" id="CHEBI:29034"/>
    </ligand>
</feature>
<feature type="binding site" evidence="1">
    <location>
        <position position="325"/>
    </location>
    <ligand>
        <name>Zn(2+)</name>
        <dbReference type="ChEBI" id="CHEBI:29105"/>
    </ligand>
</feature>
<feature type="binding site" evidence="1">
    <location>
        <position position="327"/>
    </location>
    <ligand>
        <name>N-formimidoyl-L-glutamate</name>
        <dbReference type="ChEBI" id="CHEBI:58928"/>
    </ligand>
</feature>
<feature type="binding site" evidence="1">
    <location>
        <position position="329"/>
    </location>
    <ligand>
        <name>N-formimidoyl-L-glutamate</name>
        <dbReference type="ChEBI" id="CHEBI:58928"/>
    </ligand>
</feature>
<feature type="binding site" evidence="1">
    <location>
        <position position="330"/>
    </location>
    <ligand>
        <name>4-imidazolone-5-propanoate</name>
        <dbReference type="ChEBI" id="CHEBI:77893"/>
    </ligand>
</feature>
<dbReference type="EC" id="3.5.2.7" evidence="1"/>
<dbReference type="EMBL" id="AL591985">
    <property type="protein sequence ID" value="CAC49232.1"/>
    <property type="status" value="ALT_INIT"/>
    <property type="molecule type" value="Genomic_DNA"/>
</dbReference>
<dbReference type="EMBL" id="AF032903">
    <property type="protein sequence ID" value="AAB86962.1"/>
    <property type="status" value="ALT_FRAME"/>
    <property type="molecule type" value="Genomic_DNA"/>
</dbReference>
<dbReference type="PIR" id="H95945">
    <property type="entry name" value="H95945"/>
</dbReference>
<dbReference type="RefSeq" id="NP_437372.3">
    <property type="nucleotide sequence ID" value="NC_003078.1"/>
</dbReference>
<dbReference type="RefSeq" id="WP_014527217.1">
    <property type="nucleotide sequence ID" value="NC_003078.1"/>
</dbReference>
<dbReference type="SMR" id="O31196"/>
<dbReference type="EnsemblBacteria" id="CAC49232">
    <property type="protein sequence ID" value="CAC49232"/>
    <property type="gene ID" value="SM_b21166"/>
</dbReference>
<dbReference type="KEGG" id="sme:SM_b21166"/>
<dbReference type="PATRIC" id="fig|266834.11.peg.5763"/>
<dbReference type="eggNOG" id="COG1228">
    <property type="taxonomic scope" value="Bacteria"/>
</dbReference>
<dbReference type="HOGENOM" id="CLU_041647_0_1_5"/>
<dbReference type="OrthoDB" id="9776455at2"/>
<dbReference type="UniPathway" id="UPA00379">
    <property type="reaction ID" value="UER00551"/>
</dbReference>
<dbReference type="Proteomes" id="UP000001976">
    <property type="component" value="Plasmid pSymB"/>
</dbReference>
<dbReference type="GO" id="GO:0005737">
    <property type="term" value="C:cytoplasm"/>
    <property type="evidence" value="ECO:0007669"/>
    <property type="project" value="UniProtKB-SubCell"/>
</dbReference>
<dbReference type="GO" id="GO:0050480">
    <property type="term" value="F:imidazolonepropionase activity"/>
    <property type="evidence" value="ECO:0007669"/>
    <property type="project" value="UniProtKB-UniRule"/>
</dbReference>
<dbReference type="GO" id="GO:0005506">
    <property type="term" value="F:iron ion binding"/>
    <property type="evidence" value="ECO:0007669"/>
    <property type="project" value="UniProtKB-UniRule"/>
</dbReference>
<dbReference type="GO" id="GO:0008270">
    <property type="term" value="F:zinc ion binding"/>
    <property type="evidence" value="ECO:0007669"/>
    <property type="project" value="UniProtKB-UniRule"/>
</dbReference>
<dbReference type="GO" id="GO:0019556">
    <property type="term" value="P:L-histidine catabolic process to glutamate and formamide"/>
    <property type="evidence" value="ECO:0007669"/>
    <property type="project" value="UniProtKB-UniPathway"/>
</dbReference>
<dbReference type="GO" id="GO:0019557">
    <property type="term" value="P:L-histidine catabolic process to glutamate and formate"/>
    <property type="evidence" value="ECO:0007669"/>
    <property type="project" value="UniProtKB-UniPathway"/>
</dbReference>
<dbReference type="FunFam" id="3.20.20.140:FF:000007">
    <property type="entry name" value="Imidazolonepropionase"/>
    <property type="match status" value="1"/>
</dbReference>
<dbReference type="Gene3D" id="3.20.20.140">
    <property type="entry name" value="Metal-dependent hydrolases"/>
    <property type="match status" value="1"/>
</dbReference>
<dbReference type="Gene3D" id="2.30.40.10">
    <property type="entry name" value="Urease, subunit C, domain 1"/>
    <property type="match status" value="1"/>
</dbReference>
<dbReference type="HAMAP" id="MF_00372">
    <property type="entry name" value="HutI"/>
    <property type="match status" value="1"/>
</dbReference>
<dbReference type="InterPro" id="IPR006680">
    <property type="entry name" value="Amidohydro-rel"/>
</dbReference>
<dbReference type="InterPro" id="IPR005920">
    <property type="entry name" value="HutI"/>
</dbReference>
<dbReference type="InterPro" id="IPR011059">
    <property type="entry name" value="Metal-dep_hydrolase_composite"/>
</dbReference>
<dbReference type="InterPro" id="IPR032466">
    <property type="entry name" value="Metal_Hydrolase"/>
</dbReference>
<dbReference type="NCBIfam" id="TIGR01224">
    <property type="entry name" value="hutI"/>
    <property type="match status" value="1"/>
</dbReference>
<dbReference type="PANTHER" id="PTHR42752">
    <property type="entry name" value="IMIDAZOLONEPROPIONASE"/>
    <property type="match status" value="1"/>
</dbReference>
<dbReference type="PANTHER" id="PTHR42752:SF1">
    <property type="entry name" value="IMIDAZOLONEPROPIONASE-RELATED"/>
    <property type="match status" value="1"/>
</dbReference>
<dbReference type="Pfam" id="PF01979">
    <property type="entry name" value="Amidohydro_1"/>
    <property type="match status" value="1"/>
</dbReference>
<dbReference type="SUPFAM" id="SSF51338">
    <property type="entry name" value="Composite domain of metallo-dependent hydrolases"/>
    <property type="match status" value="1"/>
</dbReference>
<dbReference type="SUPFAM" id="SSF51556">
    <property type="entry name" value="Metallo-dependent hydrolases"/>
    <property type="match status" value="1"/>
</dbReference>
<comment type="function">
    <text evidence="1">Catalyzes the hydrolytic cleavage of the carbon-nitrogen bond in imidazolone-5-propanoate to yield N-formimidoyl-L-glutamate. It is the third step in the universal histidine degradation pathway.</text>
</comment>
<comment type="catalytic activity">
    <reaction evidence="1">
        <text>4-imidazolone-5-propanoate + H2O = N-formimidoyl-L-glutamate</text>
        <dbReference type="Rhea" id="RHEA:23660"/>
        <dbReference type="ChEBI" id="CHEBI:15377"/>
        <dbReference type="ChEBI" id="CHEBI:58928"/>
        <dbReference type="ChEBI" id="CHEBI:77893"/>
        <dbReference type="EC" id="3.5.2.7"/>
    </reaction>
</comment>
<comment type="cofactor">
    <cofactor evidence="1">
        <name>Zn(2+)</name>
        <dbReference type="ChEBI" id="CHEBI:29105"/>
    </cofactor>
    <cofactor evidence="1">
        <name>Fe(3+)</name>
        <dbReference type="ChEBI" id="CHEBI:29034"/>
    </cofactor>
    <text evidence="1">Binds 1 zinc or iron ion per subunit.</text>
</comment>
<comment type="pathway">
    <text evidence="1">Amino-acid degradation; L-histidine degradation into L-glutamate; N-formimidoyl-L-glutamate from L-histidine: step 3/3.</text>
</comment>
<comment type="subcellular location">
    <subcellularLocation>
        <location evidence="1">Cytoplasm</location>
    </subcellularLocation>
</comment>
<comment type="similarity">
    <text evidence="1">Belongs to the metallo-dependent hydrolases superfamily. HutI family.</text>
</comment>
<comment type="sequence caution" evidence="2">
    <conflict type="frameshift">
        <sequence resource="EMBL-CDS" id="AAB86962"/>
    </conflict>
</comment>
<comment type="sequence caution" evidence="2">
    <conflict type="erroneous initiation">
        <sequence resource="EMBL-CDS" id="CAC49232"/>
    </conflict>
</comment>
<organism>
    <name type="scientific">Rhizobium meliloti (strain 1021)</name>
    <name type="common">Ensifer meliloti</name>
    <name type="synonym">Sinorhizobium meliloti</name>
    <dbReference type="NCBI Taxonomy" id="266834"/>
    <lineage>
        <taxon>Bacteria</taxon>
        <taxon>Pseudomonadati</taxon>
        <taxon>Pseudomonadota</taxon>
        <taxon>Alphaproteobacteria</taxon>
        <taxon>Hyphomicrobiales</taxon>
        <taxon>Rhizobiaceae</taxon>
        <taxon>Sinorhizobium/Ensifer group</taxon>
        <taxon>Sinorhizobium</taxon>
    </lineage>
</organism>
<proteinExistence type="inferred from homology"/>
<keyword id="KW-0963">Cytoplasm</keyword>
<keyword id="KW-0369">Histidine metabolism</keyword>
<keyword id="KW-0378">Hydrolase</keyword>
<keyword id="KW-0408">Iron</keyword>
<keyword id="KW-0479">Metal-binding</keyword>
<keyword id="KW-0614">Plasmid</keyword>
<keyword id="KW-1185">Reference proteome</keyword>
<keyword id="KW-0862">Zinc</keyword>
<geneLocation type="plasmid">
    <name>pSymB</name>
    <name>megaplasmid 2</name>
</geneLocation>